<accession>Q0HHH4</accession>
<dbReference type="EC" id="7.5.2.6" evidence="1"/>
<dbReference type="EMBL" id="CP000446">
    <property type="protein sequence ID" value="ABI39493.1"/>
    <property type="molecule type" value="Genomic_DNA"/>
</dbReference>
<dbReference type="RefSeq" id="WP_011623176.1">
    <property type="nucleotide sequence ID" value="NC_008321.1"/>
</dbReference>
<dbReference type="SMR" id="Q0HHH4"/>
<dbReference type="KEGG" id="she:Shewmr4_2422"/>
<dbReference type="HOGENOM" id="CLU_000604_84_4_6"/>
<dbReference type="GO" id="GO:0005886">
    <property type="term" value="C:plasma membrane"/>
    <property type="evidence" value="ECO:0007669"/>
    <property type="project" value="UniProtKB-SubCell"/>
</dbReference>
<dbReference type="GO" id="GO:0015421">
    <property type="term" value="F:ABC-type oligopeptide transporter activity"/>
    <property type="evidence" value="ECO:0007669"/>
    <property type="project" value="TreeGrafter"/>
</dbReference>
<dbReference type="GO" id="GO:0005524">
    <property type="term" value="F:ATP binding"/>
    <property type="evidence" value="ECO:0007669"/>
    <property type="project" value="UniProtKB-KW"/>
</dbReference>
<dbReference type="GO" id="GO:0016887">
    <property type="term" value="F:ATP hydrolysis activity"/>
    <property type="evidence" value="ECO:0007669"/>
    <property type="project" value="InterPro"/>
</dbReference>
<dbReference type="GO" id="GO:0034040">
    <property type="term" value="F:ATPase-coupled lipid transmembrane transporter activity"/>
    <property type="evidence" value="ECO:0007669"/>
    <property type="project" value="InterPro"/>
</dbReference>
<dbReference type="CDD" id="cd18552">
    <property type="entry name" value="ABC_6TM_MsbA_like"/>
    <property type="match status" value="1"/>
</dbReference>
<dbReference type="FunFam" id="1.20.1560.10:FF:000391">
    <property type="entry name" value="Lipid A export ATP-binding/permease protein MsbA"/>
    <property type="match status" value="1"/>
</dbReference>
<dbReference type="FunFam" id="3.40.50.300:FF:000140">
    <property type="entry name" value="Lipid A export ATP-binding/permease protein MsbA"/>
    <property type="match status" value="1"/>
</dbReference>
<dbReference type="Gene3D" id="1.20.1560.10">
    <property type="entry name" value="ABC transporter type 1, transmembrane domain"/>
    <property type="match status" value="1"/>
</dbReference>
<dbReference type="Gene3D" id="3.40.50.300">
    <property type="entry name" value="P-loop containing nucleotide triphosphate hydrolases"/>
    <property type="match status" value="1"/>
</dbReference>
<dbReference type="InterPro" id="IPR003593">
    <property type="entry name" value="AAA+_ATPase"/>
</dbReference>
<dbReference type="InterPro" id="IPR011527">
    <property type="entry name" value="ABC1_TM_dom"/>
</dbReference>
<dbReference type="InterPro" id="IPR036640">
    <property type="entry name" value="ABC1_TM_sf"/>
</dbReference>
<dbReference type="InterPro" id="IPR003439">
    <property type="entry name" value="ABC_transporter-like_ATP-bd"/>
</dbReference>
<dbReference type="InterPro" id="IPR017871">
    <property type="entry name" value="ABC_transporter-like_CS"/>
</dbReference>
<dbReference type="InterPro" id="IPR011917">
    <property type="entry name" value="ABC_transpr_lipidA"/>
</dbReference>
<dbReference type="InterPro" id="IPR027417">
    <property type="entry name" value="P-loop_NTPase"/>
</dbReference>
<dbReference type="InterPro" id="IPR039421">
    <property type="entry name" value="Type_1_exporter"/>
</dbReference>
<dbReference type="NCBIfam" id="TIGR02203">
    <property type="entry name" value="MsbA_lipidA"/>
    <property type="match status" value="1"/>
</dbReference>
<dbReference type="PANTHER" id="PTHR43394:SF1">
    <property type="entry name" value="ATP-BINDING CASSETTE SUB-FAMILY B MEMBER 10, MITOCHONDRIAL"/>
    <property type="match status" value="1"/>
</dbReference>
<dbReference type="PANTHER" id="PTHR43394">
    <property type="entry name" value="ATP-DEPENDENT PERMEASE MDL1, MITOCHONDRIAL"/>
    <property type="match status" value="1"/>
</dbReference>
<dbReference type="Pfam" id="PF00664">
    <property type="entry name" value="ABC_membrane"/>
    <property type="match status" value="1"/>
</dbReference>
<dbReference type="Pfam" id="PF00005">
    <property type="entry name" value="ABC_tran"/>
    <property type="match status" value="1"/>
</dbReference>
<dbReference type="SMART" id="SM00382">
    <property type="entry name" value="AAA"/>
    <property type="match status" value="1"/>
</dbReference>
<dbReference type="SUPFAM" id="SSF90123">
    <property type="entry name" value="ABC transporter transmembrane region"/>
    <property type="match status" value="1"/>
</dbReference>
<dbReference type="SUPFAM" id="SSF52540">
    <property type="entry name" value="P-loop containing nucleoside triphosphate hydrolases"/>
    <property type="match status" value="1"/>
</dbReference>
<dbReference type="PROSITE" id="PS50929">
    <property type="entry name" value="ABC_TM1F"/>
    <property type="match status" value="1"/>
</dbReference>
<dbReference type="PROSITE" id="PS00211">
    <property type="entry name" value="ABC_TRANSPORTER_1"/>
    <property type="match status" value="1"/>
</dbReference>
<dbReference type="PROSITE" id="PS50893">
    <property type="entry name" value="ABC_TRANSPORTER_2"/>
    <property type="match status" value="1"/>
</dbReference>
<dbReference type="PROSITE" id="PS51239">
    <property type="entry name" value="MSBA"/>
    <property type="match status" value="1"/>
</dbReference>
<protein>
    <recommendedName>
        <fullName evidence="1">ATP-dependent lipid A-core flippase</fullName>
        <ecNumber evidence="1">7.5.2.6</ecNumber>
    </recommendedName>
    <alternativeName>
        <fullName evidence="1">Lipid A export ATP-binding/permease protein MsbA</fullName>
    </alternativeName>
</protein>
<feature type="chain" id="PRO_0000271654" description="ATP-dependent lipid A-core flippase">
    <location>
        <begin position="1"/>
        <end position="601"/>
    </location>
</feature>
<feature type="transmembrane region" description="Helical" evidence="1">
    <location>
        <begin position="32"/>
        <end position="52"/>
    </location>
</feature>
<feature type="transmembrane region" description="Helical" evidence="1">
    <location>
        <begin position="81"/>
        <end position="101"/>
    </location>
</feature>
<feature type="transmembrane region" description="Helical" evidence="1">
    <location>
        <begin position="160"/>
        <end position="180"/>
    </location>
</feature>
<feature type="transmembrane region" description="Helical" evidence="1">
    <location>
        <begin position="183"/>
        <end position="203"/>
    </location>
</feature>
<feature type="transmembrane region" description="Helical" evidence="1">
    <location>
        <begin position="267"/>
        <end position="287"/>
    </location>
</feature>
<feature type="transmembrane region" description="Helical" evidence="1">
    <location>
        <begin position="296"/>
        <end position="316"/>
    </location>
</feature>
<feature type="domain" description="ABC transmembrane type-1" evidence="1">
    <location>
        <begin position="28"/>
        <end position="328"/>
    </location>
</feature>
<feature type="domain" description="ABC transporter" evidence="1">
    <location>
        <begin position="360"/>
        <end position="597"/>
    </location>
</feature>
<feature type="binding site" evidence="1">
    <location>
        <begin position="394"/>
        <end position="401"/>
    </location>
    <ligand>
        <name>ATP</name>
        <dbReference type="ChEBI" id="CHEBI:30616"/>
    </ligand>
</feature>
<name>MSBA_SHESM</name>
<sequence length="601" mass="65770">MTASPKDEMWTVFKRLLGYLKPMKGMFLLSVCGLIVYGLVDAAFISFIGPFIDKGFSSSTPAISNGIALPTSQGFHADNQVLLMAPIVVILMFSLRGFANFVSTYGISYMSARLIMDMRQQVFEHYLSLPVSYMDKENTGNLISKVTFDTEQIARASGSALISIVRDGVTVIGMLGLMFYNSWKLSLCILVIGPIMGLVITIVSRRFRKVSKQIQTAMGDVSAATEQMIKGHKNVLAFGGQETETARFAKINDRNRHQNMKLAVAQAVSQPLIMVIGSFALAFVLYAASLDSMKADLTAGTFATILGAMMAMLQPIKNLTRVNAEFQRGIAACTTVFELLDTLPESDTGTYTVKRAKGNLRFDNVSFSYEGQERRALDKIDFEVTQGQTLALVGRSGSGKSTIASLVTRFYTGLESGDIKLDDVSIYDYSLKSLRSQVALVSQQVTLFNDTIANNIAYAYPGEATREQIIQAATLAHAMEFIEQLPEGLDTQVGENGVLLSGGQRQRIAIARAMLRDAPVLILDEATSALDTESEKAIQQGLDNLRQNRTSVVIAHRLSTIESADQILVVDQGRIVERGTHKSLLELGGMYAKLYQMQFGS</sequence>
<evidence type="ECO:0000255" key="1">
    <source>
        <dbReference type="HAMAP-Rule" id="MF_01703"/>
    </source>
</evidence>
<organism>
    <name type="scientific">Shewanella sp. (strain MR-4)</name>
    <dbReference type="NCBI Taxonomy" id="60480"/>
    <lineage>
        <taxon>Bacteria</taxon>
        <taxon>Pseudomonadati</taxon>
        <taxon>Pseudomonadota</taxon>
        <taxon>Gammaproteobacteria</taxon>
        <taxon>Alteromonadales</taxon>
        <taxon>Shewanellaceae</taxon>
        <taxon>Shewanella</taxon>
    </lineage>
</organism>
<reference key="1">
    <citation type="submission" date="2006-08" db="EMBL/GenBank/DDBJ databases">
        <title>Complete sequence of Shewanella sp. MR-4.</title>
        <authorList>
            <consortium name="US DOE Joint Genome Institute"/>
            <person name="Copeland A."/>
            <person name="Lucas S."/>
            <person name="Lapidus A."/>
            <person name="Barry K."/>
            <person name="Detter J.C."/>
            <person name="Glavina del Rio T."/>
            <person name="Hammon N."/>
            <person name="Israni S."/>
            <person name="Dalin E."/>
            <person name="Tice H."/>
            <person name="Pitluck S."/>
            <person name="Kiss H."/>
            <person name="Brettin T."/>
            <person name="Bruce D."/>
            <person name="Han C."/>
            <person name="Tapia R."/>
            <person name="Gilna P."/>
            <person name="Schmutz J."/>
            <person name="Larimer F."/>
            <person name="Land M."/>
            <person name="Hauser L."/>
            <person name="Kyrpides N."/>
            <person name="Mikhailova N."/>
            <person name="Nealson K."/>
            <person name="Konstantinidis K."/>
            <person name="Klappenbach J."/>
            <person name="Tiedje J."/>
            <person name="Richardson P."/>
        </authorList>
    </citation>
    <scope>NUCLEOTIDE SEQUENCE [LARGE SCALE GENOMIC DNA]</scope>
    <source>
        <strain>MR-4</strain>
    </source>
</reference>
<gene>
    <name evidence="1" type="primary">msbA</name>
    <name type="ordered locus">Shewmr4_2422</name>
</gene>
<keyword id="KW-0067">ATP-binding</keyword>
<keyword id="KW-0997">Cell inner membrane</keyword>
<keyword id="KW-1003">Cell membrane</keyword>
<keyword id="KW-0445">Lipid transport</keyword>
<keyword id="KW-0472">Membrane</keyword>
<keyword id="KW-0547">Nucleotide-binding</keyword>
<keyword id="KW-1278">Translocase</keyword>
<keyword id="KW-0812">Transmembrane</keyword>
<keyword id="KW-1133">Transmembrane helix</keyword>
<keyword id="KW-0813">Transport</keyword>
<comment type="function">
    <text evidence="1">Involved in lipopolysaccharide (LPS) biosynthesis. Translocates lipid A-core from the inner to the outer leaflet of the inner membrane. Transmembrane domains (TMD) form a pore in the inner membrane and the ATP-binding domain (NBD) is responsible for energy generation.</text>
</comment>
<comment type="catalytic activity">
    <reaction evidence="1">
        <text>ATP + H2O + lipid A-core oligosaccharideSide 1 = ADP + phosphate + lipid A-core oligosaccharideSide 2.</text>
        <dbReference type="EC" id="7.5.2.6"/>
    </reaction>
</comment>
<comment type="subunit">
    <text evidence="1">Homodimer.</text>
</comment>
<comment type="subcellular location">
    <subcellularLocation>
        <location evidence="1">Cell inner membrane</location>
        <topology evidence="1">Multi-pass membrane protein</topology>
    </subcellularLocation>
</comment>
<comment type="domain">
    <text evidence="1">In MsbA the ATP-binding domain (NBD) and the transmembrane domain (TMD) are fused.</text>
</comment>
<comment type="similarity">
    <text evidence="1">Belongs to the ABC transporter superfamily. Lipid exporter (TC 3.A.1.106) family.</text>
</comment>
<proteinExistence type="inferred from homology"/>